<comment type="function">
    <text evidence="1">Nucleotidase with a broad substrate specificity as it can dephosphorylate various ribo- and deoxyribonucleoside 5'-monophosphates and ribonucleoside 3'-monophosphates with highest affinity to 3'-AMP. Also hydrolyzes polyphosphate (exopolyphosphatase activity) with the preference for short-chain-length substrates (P20-25). Might be involved in the regulation of dNTP and NTP pools, and in the turnover of 3'-mononucleotides produced by numerous intracellular RNases (T1, T2, and F) during the degradation of various RNAs.</text>
</comment>
<comment type="catalytic activity">
    <reaction evidence="1">
        <text>a ribonucleoside 5'-phosphate + H2O = a ribonucleoside + phosphate</text>
        <dbReference type="Rhea" id="RHEA:12484"/>
        <dbReference type="ChEBI" id="CHEBI:15377"/>
        <dbReference type="ChEBI" id="CHEBI:18254"/>
        <dbReference type="ChEBI" id="CHEBI:43474"/>
        <dbReference type="ChEBI" id="CHEBI:58043"/>
        <dbReference type="EC" id="3.1.3.5"/>
    </reaction>
</comment>
<comment type="catalytic activity">
    <reaction evidence="1">
        <text>a ribonucleoside 3'-phosphate + H2O = a ribonucleoside + phosphate</text>
        <dbReference type="Rhea" id="RHEA:10144"/>
        <dbReference type="ChEBI" id="CHEBI:13197"/>
        <dbReference type="ChEBI" id="CHEBI:15377"/>
        <dbReference type="ChEBI" id="CHEBI:18254"/>
        <dbReference type="ChEBI" id="CHEBI:43474"/>
        <dbReference type="EC" id="3.1.3.6"/>
    </reaction>
</comment>
<comment type="catalytic activity">
    <reaction evidence="1">
        <text>[phosphate](n) + H2O = [phosphate](n-1) + phosphate + H(+)</text>
        <dbReference type="Rhea" id="RHEA:21528"/>
        <dbReference type="Rhea" id="RHEA-COMP:9859"/>
        <dbReference type="Rhea" id="RHEA-COMP:14279"/>
        <dbReference type="ChEBI" id="CHEBI:15377"/>
        <dbReference type="ChEBI" id="CHEBI:15378"/>
        <dbReference type="ChEBI" id="CHEBI:16838"/>
        <dbReference type="ChEBI" id="CHEBI:43474"/>
        <dbReference type="EC" id="3.6.1.11"/>
    </reaction>
</comment>
<comment type="cofactor">
    <cofactor evidence="1">
        <name>a divalent metal cation</name>
        <dbReference type="ChEBI" id="CHEBI:60240"/>
    </cofactor>
    <text evidence="1">Binds 1 divalent metal cation per subunit.</text>
</comment>
<comment type="subcellular location">
    <subcellularLocation>
        <location evidence="1">Cytoplasm</location>
    </subcellularLocation>
</comment>
<comment type="similarity">
    <text evidence="1">Belongs to the SurE nucleotidase family.</text>
</comment>
<sequence>MRILLSNDDGVHAPGIQTLAKALREFADVQVVAPDRNRSGASNSLTLESSLRTFTFDNGDIAVQMGTPTDCVYLGVNALMRPRPDIVVSGINAGPNLGDDVIYSGTVAAAMEGRHLGFPALAVSLNGYQHYDTAAAVTCALLRGLSREPLRTGRILNVNVPDLPLAQIKGIRVTRCGSRHPADKVIPQEDPRGNTLYWIGPPGDKYDAGPDTDFAAVDEGYVSVTPLHVDLTAHSAHDVVSDWLDSVGVGTQW</sequence>
<name>SURE_SALPB</name>
<keyword id="KW-0963">Cytoplasm</keyword>
<keyword id="KW-0378">Hydrolase</keyword>
<keyword id="KW-0479">Metal-binding</keyword>
<keyword id="KW-0547">Nucleotide-binding</keyword>
<organism>
    <name type="scientific">Salmonella paratyphi B (strain ATCC BAA-1250 / SPB7)</name>
    <dbReference type="NCBI Taxonomy" id="1016998"/>
    <lineage>
        <taxon>Bacteria</taxon>
        <taxon>Pseudomonadati</taxon>
        <taxon>Pseudomonadota</taxon>
        <taxon>Gammaproteobacteria</taxon>
        <taxon>Enterobacterales</taxon>
        <taxon>Enterobacteriaceae</taxon>
        <taxon>Salmonella</taxon>
    </lineage>
</organism>
<reference key="1">
    <citation type="submission" date="2007-11" db="EMBL/GenBank/DDBJ databases">
        <authorList>
            <consortium name="The Salmonella enterica serovar Paratyphi B Genome Sequencing Project"/>
            <person name="McClelland M."/>
            <person name="Sanderson E.K."/>
            <person name="Porwollik S."/>
            <person name="Spieth J."/>
            <person name="Clifton W.S."/>
            <person name="Fulton R."/>
            <person name="Cordes M."/>
            <person name="Wollam A."/>
            <person name="Shah N."/>
            <person name="Pepin K."/>
            <person name="Bhonagiri V."/>
            <person name="Nash W."/>
            <person name="Johnson M."/>
            <person name="Thiruvilangam P."/>
            <person name="Wilson R."/>
        </authorList>
    </citation>
    <scope>NUCLEOTIDE SEQUENCE [LARGE SCALE GENOMIC DNA]</scope>
    <source>
        <strain>ATCC BAA-1250 / SPB7</strain>
    </source>
</reference>
<dbReference type="EC" id="3.1.3.5" evidence="1"/>
<dbReference type="EC" id="3.1.3.6" evidence="1"/>
<dbReference type="EC" id="3.6.1.11" evidence="1"/>
<dbReference type="EMBL" id="CP000886">
    <property type="protein sequence ID" value="ABX68981.1"/>
    <property type="molecule type" value="Genomic_DNA"/>
</dbReference>
<dbReference type="RefSeq" id="WP_001221537.1">
    <property type="nucleotide sequence ID" value="NC_010102.1"/>
</dbReference>
<dbReference type="SMR" id="A9N2D0"/>
<dbReference type="KEGG" id="spq:SPAB_03641"/>
<dbReference type="PATRIC" id="fig|1016998.12.peg.3428"/>
<dbReference type="HOGENOM" id="CLU_045192_1_2_6"/>
<dbReference type="BioCyc" id="SENT1016998:SPAB_RS14835-MONOMER"/>
<dbReference type="Proteomes" id="UP000008556">
    <property type="component" value="Chromosome"/>
</dbReference>
<dbReference type="GO" id="GO:0005737">
    <property type="term" value="C:cytoplasm"/>
    <property type="evidence" value="ECO:0007669"/>
    <property type="project" value="UniProtKB-SubCell"/>
</dbReference>
<dbReference type="GO" id="GO:0008254">
    <property type="term" value="F:3'-nucleotidase activity"/>
    <property type="evidence" value="ECO:0007669"/>
    <property type="project" value="UniProtKB-UniRule"/>
</dbReference>
<dbReference type="GO" id="GO:0008253">
    <property type="term" value="F:5'-nucleotidase activity"/>
    <property type="evidence" value="ECO:0007669"/>
    <property type="project" value="UniProtKB-UniRule"/>
</dbReference>
<dbReference type="GO" id="GO:0004309">
    <property type="term" value="F:exopolyphosphatase activity"/>
    <property type="evidence" value="ECO:0007669"/>
    <property type="project" value="UniProtKB-UniRule"/>
</dbReference>
<dbReference type="GO" id="GO:0046872">
    <property type="term" value="F:metal ion binding"/>
    <property type="evidence" value="ECO:0007669"/>
    <property type="project" value="UniProtKB-UniRule"/>
</dbReference>
<dbReference type="GO" id="GO:0000166">
    <property type="term" value="F:nucleotide binding"/>
    <property type="evidence" value="ECO:0007669"/>
    <property type="project" value="UniProtKB-KW"/>
</dbReference>
<dbReference type="FunFam" id="3.40.1210.10:FF:000001">
    <property type="entry name" value="5'/3'-nucleotidase SurE"/>
    <property type="match status" value="1"/>
</dbReference>
<dbReference type="Gene3D" id="3.40.1210.10">
    <property type="entry name" value="Survival protein SurE-like phosphatase/nucleotidase"/>
    <property type="match status" value="1"/>
</dbReference>
<dbReference type="HAMAP" id="MF_00060">
    <property type="entry name" value="SurE"/>
    <property type="match status" value="1"/>
</dbReference>
<dbReference type="InterPro" id="IPR030048">
    <property type="entry name" value="SurE"/>
</dbReference>
<dbReference type="InterPro" id="IPR002828">
    <property type="entry name" value="SurE-like_Pase/nucleotidase"/>
</dbReference>
<dbReference type="InterPro" id="IPR036523">
    <property type="entry name" value="SurE-like_sf"/>
</dbReference>
<dbReference type="NCBIfam" id="NF001488">
    <property type="entry name" value="PRK00346.1-1"/>
    <property type="match status" value="1"/>
</dbReference>
<dbReference type="NCBIfam" id="NF001489">
    <property type="entry name" value="PRK00346.1-3"/>
    <property type="match status" value="1"/>
</dbReference>
<dbReference type="NCBIfam" id="NF001490">
    <property type="entry name" value="PRK00346.1-4"/>
    <property type="match status" value="1"/>
</dbReference>
<dbReference type="NCBIfam" id="TIGR00087">
    <property type="entry name" value="surE"/>
    <property type="match status" value="1"/>
</dbReference>
<dbReference type="PANTHER" id="PTHR30457">
    <property type="entry name" value="5'-NUCLEOTIDASE SURE"/>
    <property type="match status" value="1"/>
</dbReference>
<dbReference type="PANTHER" id="PTHR30457:SF12">
    <property type="entry name" value="5'_3'-NUCLEOTIDASE SURE"/>
    <property type="match status" value="1"/>
</dbReference>
<dbReference type="Pfam" id="PF01975">
    <property type="entry name" value="SurE"/>
    <property type="match status" value="1"/>
</dbReference>
<dbReference type="SUPFAM" id="SSF64167">
    <property type="entry name" value="SurE-like"/>
    <property type="match status" value="1"/>
</dbReference>
<feature type="chain" id="PRO_1000075039" description="5'/3'-nucleotidase SurE">
    <location>
        <begin position="1"/>
        <end position="253"/>
    </location>
</feature>
<feature type="binding site" evidence="1">
    <location>
        <position position="8"/>
    </location>
    <ligand>
        <name>a divalent metal cation</name>
        <dbReference type="ChEBI" id="CHEBI:60240"/>
    </ligand>
</feature>
<feature type="binding site" evidence="1">
    <location>
        <position position="9"/>
    </location>
    <ligand>
        <name>a divalent metal cation</name>
        <dbReference type="ChEBI" id="CHEBI:60240"/>
    </ligand>
</feature>
<feature type="binding site" evidence="1">
    <location>
        <position position="39"/>
    </location>
    <ligand>
        <name>a divalent metal cation</name>
        <dbReference type="ChEBI" id="CHEBI:60240"/>
    </ligand>
</feature>
<feature type="binding site" evidence="1">
    <location>
        <position position="92"/>
    </location>
    <ligand>
        <name>a divalent metal cation</name>
        <dbReference type="ChEBI" id="CHEBI:60240"/>
    </ligand>
</feature>
<protein>
    <recommendedName>
        <fullName evidence="1">5'/3'-nucleotidase SurE</fullName>
        <ecNumber evidence="1">3.1.3.5</ecNumber>
        <ecNumber evidence="1">3.1.3.6</ecNumber>
    </recommendedName>
    <alternativeName>
        <fullName evidence="1">Exopolyphosphatase</fullName>
        <ecNumber evidence="1">3.6.1.11</ecNumber>
    </alternativeName>
    <alternativeName>
        <fullName evidence="1">Nucleoside monophosphate phosphohydrolase</fullName>
    </alternativeName>
</protein>
<proteinExistence type="inferred from homology"/>
<gene>
    <name evidence="1" type="primary">surE</name>
    <name type="ordered locus">SPAB_03641</name>
</gene>
<evidence type="ECO:0000255" key="1">
    <source>
        <dbReference type="HAMAP-Rule" id="MF_00060"/>
    </source>
</evidence>
<accession>A9N2D0</accession>